<proteinExistence type="inferred from homology"/>
<gene>
    <name evidence="1" type="primary">rpsJ</name>
    <name type="ordered locus">XOO3388</name>
</gene>
<sequence>MSEKQKIRIRLKAFDHRLIDRWASEIVETAKRTGAQVRGPIPLPTKIERYTILVSPHADKDARDQYETRTHKRVLDIVDPNDKTVDALMKLELAAGVDVQIKLT</sequence>
<accession>Q2NZY4</accession>
<feature type="chain" id="PRO_0000237120" description="Small ribosomal subunit protein uS10">
    <location>
        <begin position="1"/>
        <end position="104"/>
    </location>
</feature>
<reference key="1">
    <citation type="journal article" date="2005" name="Jpn. Agric. Res. Q.">
        <title>Genome sequence of Xanthomonas oryzae pv. oryzae suggests contribution of large numbers of effector genes and insertion sequences to its race diversity.</title>
        <authorList>
            <person name="Ochiai H."/>
            <person name="Inoue Y."/>
            <person name="Takeya M."/>
            <person name="Sasaki A."/>
            <person name="Kaku H."/>
        </authorList>
    </citation>
    <scope>NUCLEOTIDE SEQUENCE [LARGE SCALE GENOMIC DNA]</scope>
    <source>
        <strain>MAFF 311018</strain>
    </source>
</reference>
<name>RS10_XANOM</name>
<organism>
    <name type="scientific">Xanthomonas oryzae pv. oryzae (strain MAFF 311018)</name>
    <dbReference type="NCBI Taxonomy" id="342109"/>
    <lineage>
        <taxon>Bacteria</taxon>
        <taxon>Pseudomonadati</taxon>
        <taxon>Pseudomonadota</taxon>
        <taxon>Gammaproteobacteria</taxon>
        <taxon>Lysobacterales</taxon>
        <taxon>Lysobacteraceae</taxon>
        <taxon>Xanthomonas</taxon>
    </lineage>
</organism>
<evidence type="ECO:0000255" key="1">
    <source>
        <dbReference type="HAMAP-Rule" id="MF_00508"/>
    </source>
</evidence>
<evidence type="ECO:0000305" key="2"/>
<keyword id="KW-0687">Ribonucleoprotein</keyword>
<keyword id="KW-0689">Ribosomal protein</keyword>
<protein>
    <recommendedName>
        <fullName evidence="1">Small ribosomal subunit protein uS10</fullName>
    </recommendedName>
    <alternativeName>
        <fullName evidence="2">30S ribosomal protein S10</fullName>
    </alternativeName>
</protein>
<dbReference type="EMBL" id="AP008229">
    <property type="protein sequence ID" value="BAE70143.1"/>
    <property type="molecule type" value="Genomic_DNA"/>
</dbReference>
<dbReference type="RefSeq" id="WP_011409257.1">
    <property type="nucleotide sequence ID" value="NC_007705.1"/>
</dbReference>
<dbReference type="SMR" id="Q2NZY4"/>
<dbReference type="GeneID" id="77338714"/>
<dbReference type="KEGG" id="xom:XOO3388"/>
<dbReference type="HOGENOM" id="CLU_122625_1_3_6"/>
<dbReference type="GO" id="GO:1990904">
    <property type="term" value="C:ribonucleoprotein complex"/>
    <property type="evidence" value="ECO:0007669"/>
    <property type="project" value="UniProtKB-KW"/>
</dbReference>
<dbReference type="GO" id="GO:0005840">
    <property type="term" value="C:ribosome"/>
    <property type="evidence" value="ECO:0007669"/>
    <property type="project" value="UniProtKB-KW"/>
</dbReference>
<dbReference type="GO" id="GO:0003735">
    <property type="term" value="F:structural constituent of ribosome"/>
    <property type="evidence" value="ECO:0007669"/>
    <property type="project" value="InterPro"/>
</dbReference>
<dbReference type="GO" id="GO:0000049">
    <property type="term" value="F:tRNA binding"/>
    <property type="evidence" value="ECO:0007669"/>
    <property type="project" value="UniProtKB-UniRule"/>
</dbReference>
<dbReference type="GO" id="GO:0006412">
    <property type="term" value="P:translation"/>
    <property type="evidence" value="ECO:0007669"/>
    <property type="project" value="UniProtKB-UniRule"/>
</dbReference>
<dbReference type="FunFam" id="3.30.70.600:FF:000001">
    <property type="entry name" value="30S ribosomal protein S10"/>
    <property type="match status" value="1"/>
</dbReference>
<dbReference type="Gene3D" id="3.30.70.600">
    <property type="entry name" value="Ribosomal protein S10 domain"/>
    <property type="match status" value="1"/>
</dbReference>
<dbReference type="HAMAP" id="MF_00508">
    <property type="entry name" value="Ribosomal_uS10"/>
    <property type="match status" value="1"/>
</dbReference>
<dbReference type="InterPro" id="IPR001848">
    <property type="entry name" value="Ribosomal_uS10"/>
</dbReference>
<dbReference type="InterPro" id="IPR018268">
    <property type="entry name" value="Ribosomal_uS10_CS"/>
</dbReference>
<dbReference type="InterPro" id="IPR027486">
    <property type="entry name" value="Ribosomal_uS10_dom"/>
</dbReference>
<dbReference type="InterPro" id="IPR036838">
    <property type="entry name" value="Ribosomal_uS10_dom_sf"/>
</dbReference>
<dbReference type="NCBIfam" id="NF001861">
    <property type="entry name" value="PRK00596.1"/>
    <property type="match status" value="1"/>
</dbReference>
<dbReference type="NCBIfam" id="TIGR01049">
    <property type="entry name" value="rpsJ_bact"/>
    <property type="match status" value="1"/>
</dbReference>
<dbReference type="PANTHER" id="PTHR11700">
    <property type="entry name" value="30S RIBOSOMAL PROTEIN S10 FAMILY MEMBER"/>
    <property type="match status" value="1"/>
</dbReference>
<dbReference type="Pfam" id="PF00338">
    <property type="entry name" value="Ribosomal_S10"/>
    <property type="match status" value="1"/>
</dbReference>
<dbReference type="PRINTS" id="PR00971">
    <property type="entry name" value="RIBOSOMALS10"/>
</dbReference>
<dbReference type="SMART" id="SM01403">
    <property type="entry name" value="Ribosomal_S10"/>
    <property type="match status" value="1"/>
</dbReference>
<dbReference type="SUPFAM" id="SSF54999">
    <property type="entry name" value="Ribosomal protein S10"/>
    <property type="match status" value="1"/>
</dbReference>
<dbReference type="PROSITE" id="PS00361">
    <property type="entry name" value="RIBOSOMAL_S10"/>
    <property type="match status" value="1"/>
</dbReference>
<comment type="function">
    <text evidence="1">Involved in the binding of tRNA to the ribosomes.</text>
</comment>
<comment type="subunit">
    <text evidence="1">Part of the 30S ribosomal subunit.</text>
</comment>
<comment type="similarity">
    <text evidence="1">Belongs to the universal ribosomal protein uS10 family.</text>
</comment>